<organism>
    <name type="scientific">Caenorhabditis elegans</name>
    <dbReference type="NCBI Taxonomy" id="6239"/>
    <lineage>
        <taxon>Eukaryota</taxon>
        <taxon>Metazoa</taxon>
        <taxon>Ecdysozoa</taxon>
        <taxon>Nematoda</taxon>
        <taxon>Chromadorea</taxon>
        <taxon>Rhabditida</taxon>
        <taxon>Rhabditina</taxon>
        <taxon>Rhabditomorpha</taxon>
        <taxon>Rhabditoidea</taxon>
        <taxon>Rhabditidae</taxon>
        <taxon>Peloderinae</taxon>
        <taxon>Caenorhabditis</taxon>
    </lineage>
</organism>
<accession>Q21878</accession>
<accession>Q867F1</accession>
<accession>Q86PL0</accession>
<accession>Q86PL1</accession>
<sequence length="445" mass="50670">MNGTLADQLQSHLANYGQPMVNSQRNEDPSMYMNGSAASVSHTNGSSSMGNDQKFPSYKRMAQRRKVPEGELCAVCSDLATGYHYGVASCNGCKTFFRRTIVSEQTFICQYNGNCDVNKNIRCACRHCRFNKCLLVGMDAKALQIPAIQNDRDRIGPTKKIKMSSGSDDEQATTPHRLQDQEIIDQLTQVEGLCQELRRCIIPEVTGVTHALTSPCLLFETTDLKVDVSLTNTIFKELFPASMNDIRMWNIREMRICIEWAKTFDVYQRLNLFDQFALVRNFAFAFNLLNRVFYSPDHGPDKIVFQNGAFIMRQPQQQVQLSGCRPIYTRQMDEIMIPFRKLQLSVAEFATFKAALFFNPDALDLSPQAKQEVFEERNKYLGGLFTCITQKIGIPTGVQKYGSLLMMTASIQNILAQNEENMQVMELFKNWEVDPFVKELCMKRA</sequence>
<protein>
    <recommendedName>
        <fullName>Nuclear hormone receptor family member nhr-1</fullName>
    </recommendedName>
</protein>
<name>NHR1_CAEEL</name>
<reference key="1">
    <citation type="journal article" date="2005" name="J. Mol. Evol.">
        <title>Explosive lineage-specific expansion of the orphan nuclear receptor HNF4 in nematodes.</title>
        <authorList>
            <person name="Robinson-Rechavi M."/>
            <person name="Maina C.V."/>
            <person name="Gissendanner C.R."/>
            <person name="Laudet V."/>
            <person name="Sluder A."/>
        </authorList>
    </citation>
    <scope>NUCLEOTIDE SEQUENCE [MRNA] (ISOFORMS 1 AND 2)</scope>
    <scope>FUNCTION</scope>
</reference>
<reference key="2">
    <citation type="journal article" date="1998" name="Science">
        <title>Genome sequence of the nematode C. elegans: a platform for investigating biology.</title>
        <authorList>
            <consortium name="The C. elegans sequencing consortium"/>
        </authorList>
    </citation>
    <scope>NUCLEOTIDE SEQUENCE [LARGE SCALE GENOMIC DNA]</scope>
    <source>
        <strain>Bristol N2</strain>
    </source>
</reference>
<reference key="3">
    <citation type="journal article" date="2018" name="Nat. Commun.">
        <title>Neurohormonal signaling via a sulfotransferase antagonizes insulin-like signaling to regulate a Caenorhabditis elegans stress response.</title>
        <authorList>
            <person name="Burton N.O."/>
            <person name="Dwivedi V.K."/>
            <person name="Burkhart K.B."/>
            <person name="Kaplan R.E.W."/>
            <person name="Baugh L.R."/>
            <person name="Horvitz H.R."/>
        </authorList>
    </citation>
    <scope>FUNCTION</scope>
    <scope>MUTAGENESIS OF 18-GLN--ALA-445; 179-GLN--ALA-445; SER-295 AND GLY-323</scope>
</reference>
<keyword id="KW-0025">Alternative splicing</keyword>
<keyword id="KW-0238">DNA-binding</keyword>
<keyword id="KW-0479">Metal-binding</keyword>
<keyword id="KW-0539">Nucleus</keyword>
<keyword id="KW-0675">Receptor</keyword>
<keyword id="KW-1185">Reference proteome</keyword>
<keyword id="KW-0804">Transcription</keyword>
<keyword id="KW-0805">Transcription regulation</keyword>
<keyword id="KW-0862">Zinc</keyword>
<keyword id="KW-0863">Zinc-finger</keyword>
<evidence type="ECO:0000255" key="1">
    <source>
        <dbReference type="PROSITE-ProRule" id="PRU00407"/>
    </source>
</evidence>
<evidence type="ECO:0000255" key="2">
    <source>
        <dbReference type="PROSITE-ProRule" id="PRU01189"/>
    </source>
</evidence>
<evidence type="ECO:0000256" key="3">
    <source>
        <dbReference type="SAM" id="MobiDB-lite"/>
    </source>
</evidence>
<evidence type="ECO:0000269" key="4">
    <source>
    </source>
</evidence>
<evidence type="ECO:0000269" key="5">
    <source>
    </source>
</evidence>
<evidence type="ECO:0000303" key="6">
    <source>
    </source>
</evidence>
<evidence type="ECO:0000305" key="7"/>
<dbReference type="EMBL" id="AY204163">
    <property type="protein sequence ID" value="AAO39167.1"/>
    <property type="molecule type" value="mRNA"/>
</dbReference>
<dbReference type="EMBL" id="AY204164">
    <property type="protein sequence ID" value="AAO39168.1"/>
    <property type="molecule type" value="mRNA"/>
</dbReference>
<dbReference type="EMBL" id="AY204165">
    <property type="protein sequence ID" value="AAO39169.1"/>
    <property type="molecule type" value="mRNA"/>
</dbReference>
<dbReference type="EMBL" id="AY204166">
    <property type="protein sequence ID" value="AAO39170.1"/>
    <property type="molecule type" value="mRNA"/>
</dbReference>
<dbReference type="EMBL" id="FO081263">
    <property type="protein sequence ID" value="CCD70297.1"/>
    <property type="molecule type" value="Genomic_DNA"/>
</dbReference>
<dbReference type="EMBL" id="FO081263">
    <property type="protein sequence ID" value="CCD70296.1"/>
    <property type="molecule type" value="Genomic_DNA"/>
</dbReference>
<dbReference type="PIR" id="T28881">
    <property type="entry name" value="T28881"/>
</dbReference>
<dbReference type="RefSeq" id="NP_001024853.1">
    <molecule id="Q21878-1"/>
    <property type="nucleotide sequence ID" value="NM_001029682.6"/>
</dbReference>
<dbReference type="RefSeq" id="NP_001024855.1">
    <molecule id="Q21878-2"/>
    <property type="nucleotide sequence ID" value="NM_001029684.7"/>
</dbReference>
<dbReference type="SMR" id="Q21878"/>
<dbReference type="BioGRID" id="46654">
    <property type="interactions" value="4"/>
</dbReference>
<dbReference type="FunCoup" id="Q21878">
    <property type="interactions" value="3"/>
</dbReference>
<dbReference type="IntAct" id="Q21878">
    <property type="interactions" value="2"/>
</dbReference>
<dbReference type="STRING" id="6239.R09G11.2a.1"/>
<dbReference type="iPTMnet" id="Q21878"/>
<dbReference type="PaxDb" id="6239-R09G11.2a.2"/>
<dbReference type="PeptideAtlas" id="Q21878"/>
<dbReference type="EnsemblMetazoa" id="R09G11.2a.1">
    <molecule id="Q21878-1"/>
    <property type="protein sequence ID" value="R09G11.2a.1"/>
    <property type="gene ID" value="WBGene00003600"/>
</dbReference>
<dbReference type="EnsemblMetazoa" id="R09G11.2a.2">
    <molecule id="Q21878-1"/>
    <property type="protein sequence ID" value="R09G11.2a.2"/>
    <property type="gene ID" value="WBGene00003600"/>
</dbReference>
<dbReference type="EnsemblMetazoa" id="R09G11.2a.3">
    <molecule id="Q21878-1"/>
    <property type="protein sequence ID" value="R09G11.2a.3"/>
    <property type="gene ID" value="WBGene00003600"/>
</dbReference>
<dbReference type="EnsemblMetazoa" id="R09G11.2c.1">
    <molecule id="Q21878-2"/>
    <property type="protein sequence ID" value="R09G11.2c.1"/>
    <property type="gene ID" value="WBGene00003600"/>
</dbReference>
<dbReference type="EnsemblMetazoa" id="R09G11.2c.2">
    <molecule id="Q21878-2"/>
    <property type="protein sequence ID" value="R09G11.2c.2"/>
    <property type="gene ID" value="WBGene00003600"/>
</dbReference>
<dbReference type="GeneID" id="181783"/>
<dbReference type="KEGG" id="cel:CELE_R09G11.2"/>
<dbReference type="UCSC" id="R09G11.2d">
    <molecule id="Q21878-1"/>
    <property type="organism name" value="c. elegans"/>
</dbReference>
<dbReference type="AGR" id="WB:WBGene00003600"/>
<dbReference type="CTD" id="181783"/>
<dbReference type="WormBase" id="R09G11.2a">
    <molecule id="Q21878-1"/>
    <property type="protein sequence ID" value="CE34353"/>
    <property type="gene ID" value="WBGene00003600"/>
    <property type="gene designation" value="nhr-1"/>
</dbReference>
<dbReference type="WormBase" id="R09G11.2c">
    <molecule id="Q21878-2"/>
    <property type="protein sequence ID" value="CE33812"/>
    <property type="gene ID" value="WBGene00003600"/>
    <property type="gene designation" value="nhr-1"/>
</dbReference>
<dbReference type="eggNOG" id="KOG3575">
    <property type="taxonomic scope" value="Eukaryota"/>
</dbReference>
<dbReference type="InParanoid" id="Q21878"/>
<dbReference type="OMA" id="FEENWKM"/>
<dbReference type="OrthoDB" id="5771769at2759"/>
<dbReference type="PhylomeDB" id="Q21878"/>
<dbReference type="Reactome" id="R-CEL-383280">
    <property type="pathway name" value="Nuclear Receptor transcription pathway"/>
</dbReference>
<dbReference type="PRO" id="PR:Q21878"/>
<dbReference type="Proteomes" id="UP000001940">
    <property type="component" value="Chromosome X"/>
</dbReference>
<dbReference type="Bgee" id="WBGene00003600">
    <property type="expression patterns" value="Expressed in pharyngeal muscle cell (C elegans) and 3 other cell types or tissues"/>
</dbReference>
<dbReference type="ExpressionAtlas" id="Q21878">
    <property type="expression patterns" value="baseline and differential"/>
</dbReference>
<dbReference type="GO" id="GO:0005634">
    <property type="term" value="C:nucleus"/>
    <property type="evidence" value="ECO:0007669"/>
    <property type="project" value="UniProtKB-SubCell"/>
</dbReference>
<dbReference type="GO" id="GO:0004879">
    <property type="term" value="F:nuclear receptor activity"/>
    <property type="evidence" value="ECO:0000318"/>
    <property type="project" value="GO_Central"/>
</dbReference>
<dbReference type="GO" id="GO:0000978">
    <property type="term" value="F:RNA polymerase II cis-regulatory region sequence-specific DNA binding"/>
    <property type="evidence" value="ECO:0000318"/>
    <property type="project" value="GO_Central"/>
</dbReference>
<dbReference type="GO" id="GO:0008270">
    <property type="term" value="F:zinc ion binding"/>
    <property type="evidence" value="ECO:0007669"/>
    <property type="project" value="UniProtKB-KW"/>
</dbReference>
<dbReference type="GO" id="GO:0030154">
    <property type="term" value="P:cell differentiation"/>
    <property type="evidence" value="ECO:0000318"/>
    <property type="project" value="GO_Central"/>
</dbReference>
<dbReference type="GO" id="GO:0047484">
    <property type="term" value="P:regulation of response to osmotic stress"/>
    <property type="evidence" value="ECO:0000315"/>
    <property type="project" value="UniProtKB"/>
</dbReference>
<dbReference type="GO" id="GO:0006357">
    <property type="term" value="P:regulation of transcription by RNA polymerase II"/>
    <property type="evidence" value="ECO:0000318"/>
    <property type="project" value="GO_Central"/>
</dbReference>
<dbReference type="CDD" id="cd06960">
    <property type="entry name" value="NR_DBD_HNF4A"/>
    <property type="match status" value="1"/>
</dbReference>
<dbReference type="CDD" id="cd06157">
    <property type="entry name" value="NR_LBD"/>
    <property type="match status" value="1"/>
</dbReference>
<dbReference type="FunFam" id="3.30.50.10:FF:000030">
    <property type="entry name" value="Nuclear Hormone Receptor family"/>
    <property type="match status" value="1"/>
</dbReference>
<dbReference type="Gene3D" id="3.30.50.10">
    <property type="entry name" value="Erythroid Transcription Factor GATA-1, subunit A"/>
    <property type="match status" value="1"/>
</dbReference>
<dbReference type="Gene3D" id="1.10.565.10">
    <property type="entry name" value="Retinoid X Receptor"/>
    <property type="match status" value="1"/>
</dbReference>
<dbReference type="InterPro" id="IPR049636">
    <property type="entry name" value="HNF4-like_DBD"/>
</dbReference>
<dbReference type="InterPro" id="IPR035500">
    <property type="entry name" value="NHR-like_dom_sf"/>
</dbReference>
<dbReference type="InterPro" id="IPR000536">
    <property type="entry name" value="Nucl_hrmn_rcpt_lig-bd"/>
</dbReference>
<dbReference type="InterPro" id="IPR050274">
    <property type="entry name" value="Nuclear_hormone_rcpt_NR2"/>
</dbReference>
<dbReference type="InterPro" id="IPR001723">
    <property type="entry name" value="Nuclear_hrmn_rcpt"/>
</dbReference>
<dbReference type="InterPro" id="IPR001628">
    <property type="entry name" value="Znf_hrmn_rcpt"/>
</dbReference>
<dbReference type="InterPro" id="IPR013088">
    <property type="entry name" value="Znf_NHR/GATA"/>
</dbReference>
<dbReference type="PANTHER" id="PTHR24083">
    <property type="entry name" value="NUCLEAR HORMONE RECEPTOR"/>
    <property type="match status" value="1"/>
</dbReference>
<dbReference type="Pfam" id="PF00104">
    <property type="entry name" value="Hormone_recep"/>
    <property type="match status" value="1"/>
</dbReference>
<dbReference type="Pfam" id="PF00105">
    <property type="entry name" value="zf-C4"/>
    <property type="match status" value="1"/>
</dbReference>
<dbReference type="PRINTS" id="PR00398">
    <property type="entry name" value="STRDHORMONER"/>
</dbReference>
<dbReference type="PRINTS" id="PR00047">
    <property type="entry name" value="STROIDFINGER"/>
</dbReference>
<dbReference type="SMART" id="SM00430">
    <property type="entry name" value="HOLI"/>
    <property type="match status" value="1"/>
</dbReference>
<dbReference type="SMART" id="SM00399">
    <property type="entry name" value="ZnF_C4"/>
    <property type="match status" value="1"/>
</dbReference>
<dbReference type="SUPFAM" id="SSF57716">
    <property type="entry name" value="Glucocorticoid receptor-like (DNA-binding domain)"/>
    <property type="match status" value="1"/>
</dbReference>
<dbReference type="SUPFAM" id="SSF48508">
    <property type="entry name" value="Nuclear receptor ligand-binding domain"/>
    <property type="match status" value="1"/>
</dbReference>
<dbReference type="PROSITE" id="PS51843">
    <property type="entry name" value="NR_LBD"/>
    <property type="match status" value="1"/>
</dbReference>
<dbReference type="PROSITE" id="PS00031">
    <property type="entry name" value="NUCLEAR_REC_DBD_1"/>
    <property type="match status" value="1"/>
</dbReference>
<dbReference type="PROSITE" id="PS51030">
    <property type="entry name" value="NUCLEAR_REC_DBD_2"/>
    <property type="match status" value="1"/>
</dbReference>
<proteinExistence type="evidence at protein level"/>
<gene>
    <name type="primary">nhr-1</name>
    <name type="ORF">R09G11.2</name>
</gene>
<comment type="function">
    <text evidence="4 5">Orphan nuclear receptor which acts in concert with the insulin/IGF-1-like signaling (IIS) pathway during osmotic stress, perhaps in response to a ligand modified by the sulfotransferase ssu-1.</text>
</comment>
<comment type="subcellular location">
    <subcellularLocation>
        <location evidence="1">Nucleus</location>
    </subcellularLocation>
</comment>
<comment type="alternative products">
    <event type="alternative splicing"/>
    <isoform>
        <id>Q21878-1</id>
        <name>1</name>
        <name>a</name>
        <sequence type="displayed"/>
    </isoform>
    <isoform>
        <id>Q21878-2</id>
        <name>2</name>
        <name>c</name>
        <sequence type="described" ref="VSP_007763"/>
    </isoform>
</comment>
<comment type="similarity">
    <text evidence="7">Belongs to the nuclear hormone receptor family.</text>
</comment>
<feature type="chain" id="PRO_0000053755" description="Nuclear hormone receptor family member nhr-1">
    <location>
        <begin position="1"/>
        <end position="445"/>
    </location>
</feature>
<feature type="domain" description="NR LBD" evidence="2">
    <location>
        <begin position="179"/>
        <end position="444"/>
    </location>
</feature>
<feature type="DNA-binding region" description="Nuclear receptor" evidence="1">
    <location>
        <begin position="70"/>
        <end position="145"/>
    </location>
</feature>
<feature type="zinc finger region" description="NR C4-type" evidence="1">
    <location>
        <begin position="73"/>
        <end position="93"/>
    </location>
</feature>
<feature type="zinc finger region" description="NR C4-type" evidence="1">
    <location>
        <begin position="109"/>
        <end position="133"/>
    </location>
</feature>
<feature type="region of interest" description="Disordered" evidence="3">
    <location>
        <begin position="19"/>
        <end position="55"/>
    </location>
</feature>
<feature type="compositionally biased region" description="Polar residues" evidence="3">
    <location>
        <begin position="36"/>
        <end position="51"/>
    </location>
</feature>
<feature type="splice variant" id="VSP_007763" description="In isoform 2." evidence="6">
    <location>
        <begin position="142"/>
        <end position="146"/>
    </location>
</feature>
<feature type="mutagenesis site" description="In n6219; many mutants fail to undergo developmental arrest in response to osmotic stress." evidence="5">
    <location>
        <begin position="18"/>
        <end position="445"/>
    </location>
</feature>
<feature type="mutagenesis site" description="In n6242; many mutants fail to undergo developmental arrest in response to osmotic stress; exacerbated on insulin-like receptor daf-2 mutant background." evidence="5">
    <location>
        <begin position="179"/>
        <end position="445"/>
    </location>
</feature>
<feature type="mutagenesis site" description="In n6228; many mutants fail to undergo developmental arrest in response to osmotic stress." evidence="5">
    <original>S</original>
    <variation>L</variation>
    <location>
        <position position="295"/>
    </location>
</feature>
<feature type="mutagenesis site" description="In n6231; many mutants fail to undergo developmental arrest in response to osmotic stress." evidence="5">
    <original>G</original>
    <variation>Q</variation>
    <location>
        <position position="323"/>
    </location>
</feature>